<feature type="chain" id="PRO_1000130313" description="Ribosomal RNA small subunit methyltransferase A">
    <location>
        <begin position="1"/>
        <end position="273"/>
    </location>
</feature>
<feature type="binding site" evidence="1">
    <location>
        <position position="18"/>
    </location>
    <ligand>
        <name>S-adenosyl-L-methionine</name>
        <dbReference type="ChEBI" id="CHEBI:59789"/>
    </ligand>
</feature>
<feature type="binding site" evidence="1">
    <location>
        <position position="20"/>
    </location>
    <ligand>
        <name>S-adenosyl-L-methionine</name>
        <dbReference type="ChEBI" id="CHEBI:59789"/>
    </ligand>
</feature>
<feature type="binding site" evidence="1">
    <location>
        <position position="45"/>
    </location>
    <ligand>
        <name>S-adenosyl-L-methionine</name>
        <dbReference type="ChEBI" id="CHEBI:59789"/>
    </ligand>
</feature>
<feature type="binding site" evidence="1">
    <location>
        <position position="66"/>
    </location>
    <ligand>
        <name>S-adenosyl-L-methionine</name>
        <dbReference type="ChEBI" id="CHEBI:59789"/>
    </ligand>
</feature>
<feature type="binding site" evidence="1">
    <location>
        <position position="91"/>
    </location>
    <ligand>
        <name>S-adenosyl-L-methionine</name>
        <dbReference type="ChEBI" id="CHEBI:59789"/>
    </ligand>
</feature>
<feature type="binding site" evidence="1">
    <location>
        <position position="113"/>
    </location>
    <ligand>
        <name>S-adenosyl-L-methionine</name>
        <dbReference type="ChEBI" id="CHEBI:59789"/>
    </ligand>
</feature>
<gene>
    <name evidence="1" type="primary">rsmA</name>
    <name evidence="1" type="synonym">ksgA</name>
    <name type="ordered locus">SeAg_B0099</name>
</gene>
<accession>B5F771</accession>
<proteinExistence type="inferred from homology"/>
<name>RSMA_SALA4</name>
<protein>
    <recommendedName>
        <fullName evidence="1">Ribosomal RNA small subunit methyltransferase A</fullName>
        <ecNumber evidence="1">2.1.1.182</ecNumber>
    </recommendedName>
    <alternativeName>
        <fullName evidence="1">16S rRNA (adenine(1518)-N(6)/adenine(1519)-N(6))-dimethyltransferase</fullName>
    </alternativeName>
    <alternativeName>
        <fullName evidence="1">16S rRNA dimethyladenosine transferase</fullName>
    </alternativeName>
    <alternativeName>
        <fullName evidence="1">16S rRNA dimethylase</fullName>
    </alternativeName>
    <alternativeName>
        <fullName evidence="1">S-adenosylmethionine-6-N', N'-adenosyl(rRNA) dimethyltransferase</fullName>
    </alternativeName>
</protein>
<sequence length="273" mass="30516">MNNRVHQGHLARKRFGQNFLNDRFVIDSIVSAINPQKGQAMVEIGPGLAALTEPVGERLDKLTVIELDRDLAARLQTHPFLGPKLTIYQQDAMTMNFGELSAQLGQPLRVFGNLPYNISTPLMFHLFSYTDAIADMHFMLQKEVVNRLVAGPNSKAYGRLSVMAQYYCQVIPVLEVPPSAFTPPPKVDSAVVRLVPHATMPYPVKDIRVLSRITTEAFNQRRKTIRNSLGNLFSVETLTEMGIDPAMRAENISVAQYCQMANYLSENAPLKES</sequence>
<dbReference type="EC" id="2.1.1.182" evidence="1"/>
<dbReference type="EMBL" id="CP001138">
    <property type="protein sequence ID" value="ACH50298.1"/>
    <property type="molecule type" value="Genomic_DNA"/>
</dbReference>
<dbReference type="RefSeq" id="WP_001065397.1">
    <property type="nucleotide sequence ID" value="NC_011149.1"/>
</dbReference>
<dbReference type="SMR" id="B5F771"/>
<dbReference type="KEGG" id="sea:SeAg_B0099"/>
<dbReference type="HOGENOM" id="CLU_041220_0_1_6"/>
<dbReference type="Proteomes" id="UP000008819">
    <property type="component" value="Chromosome"/>
</dbReference>
<dbReference type="GO" id="GO:0005829">
    <property type="term" value="C:cytosol"/>
    <property type="evidence" value="ECO:0007669"/>
    <property type="project" value="TreeGrafter"/>
</dbReference>
<dbReference type="GO" id="GO:0052908">
    <property type="term" value="F:16S rRNA (adenine(1518)-N(6)/adenine(1519)-N(6))-dimethyltransferase activity"/>
    <property type="evidence" value="ECO:0007669"/>
    <property type="project" value="UniProtKB-EC"/>
</dbReference>
<dbReference type="GO" id="GO:0003723">
    <property type="term" value="F:RNA binding"/>
    <property type="evidence" value="ECO:0007669"/>
    <property type="project" value="UniProtKB-KW"/>
</dbReference>
<dbReference type="FunFam" id="1.10.8.100:FF:000001">
    <property type="entry name" value="Ribosomal RNA small subunit methyltransferase A"/>
    <property type="match status" value="1"/>
</dbReference>
<dbReference type="FunFam" id="3.40.50.150:FF:000006">
    <property type="entry name" value="Ribosomal RNA small subunit methyltransferase A"/>
    <property type="match status" value="1"/>
</dbReference>
<dbReference type="Gene3D" id="1.10.8.100">
    <property type="entry name" value="Ribosomal RNA adenine dimethylase-like, domain 2"/>
    <property type="match status" value="1"/>
</dbReference>
<dbReference type="Gene3D" id="3.40.50.150">
    <property type="entry name" value="Vaccinia Virus protein VP39"/>
    <property type="match status" value="1"/>
</dbReference>
<dbReference type="HAMAP" id="MF_00607">
    <property type="entry name" value="16SrRNA_methyltr_A"/>
    <property type="match status" value="1"/>
</dbReference>
<dbReference type="InterPro" id="IPR001737">
    <property type="entry name" value="KsgA/Erm"/>
</dbReference>
<dbReference type="InterPro" id="IPR023165">
    <property type="entry name" value="rRNA_Ade_diMease-like_C"/>
</dbReference>
<dbReference type="InterPro" id="IPR020596">
    <property type="entry name" value="rRNA_Ade_Mease_Trfase_CS"/>
</dbReference>
<dbReference type="InterPro" id="IPR020598">
    <property type="entry name" value="rRNA_Ade_methylase_Trfase_N"/>
</dbReference>
<dbReference type="InterPro" id="IPR011530">
    <property type="entry name" value="rRNA_adenine_dimethylase"/>
</dbReference>
<dbReference type="InterPro" id="IPR029063">
    <property type="entry name" value="SAM-dependent_MTases_sf"/>
</dbReference>
<dbReference type="NCBIfam" id="TIGR00755">
    <property type="entry name" value="ksgA"/>
    <property type="match status" value="1"/>
</dbReference>
<dbReference type="PANTHER" id="PTHR11727">
    <property type="entry name" value="DIMETHYLADENOSINE TRANSFERASE"/>
    <property type="match status" value="1"/>
</dbReference>
<dbReference type="PANTHER" id="PTHR11727:SF7">
    <property type="entry name" value="DIMETHYLADENOSINE TRANSFERASE-RELATED"/>
    <property type="match status" value="1"/>
</dbReference>
<dbReference type="Pfam" id="PF00398">
    <property type="entry name" value="RrnaAD"/>
    <property type="match status" value="1"/>
</dbReference>
<dbReference type="SMART" id="SM00650">
    <property type="entry name" value="rADc"/>
    <property type="match status" value="1"/>
</dbReference>
<dbReference type="SUPFAM" id="SSF53335">
    <property type="entry name" value="S-adenosyl-L-methionine-dependent methyltransferases"/>
    <property type="match status" value="1"/>
</dbReference>
<dbReference type="PROSITE" id="PS01131">
    <property type="entry name" value="RRNA_A_DIMETH"/>
    <property type="match status" value="1"/>
</dbReference>
<dbReference type="PROSITE" id="PS51689">
    <property type="entry name" value="SAM_RNA_A_N6_MT"/>
    <property type="match status" value="1"/>
</dbReference>
<organism>
    <name type="scientific">Salmonella agona (strain SL483)</name>
    <dbReference type="NCBI Taxonomy" id="454166"/>
    <lineage>
        <taxon>Bacteria</taxon>
        <taxon>Pseudomonadati</taxon>
        <taxon>Pseudomonadota</taxon>
        <taxon>Gammaproteobacteria</taxon>
        <taxon>Enterobacterales</taxon>
        <taxon>Enterobacteriaceae</taxon>
        <taxon>Salmonella</taxon>
    </lineage>
</organism>
<evidence type="ECO:0000255" key="1">
    <source>
        <dbReference type="HAMAP-Rule" id="MF_00607"/>
    </source>
</evidence>
<comment type="function">
    <text evidence="1">Specifically dimethylates two adjacent adenosines (A1518 and A1519) in the loop of a conserved hairpin near the 3'-end of 16S rRNA in the 30S particle. May play a critical role in biogenesis of 30S subunits.</text>
</comment>
<comment type="catalytic activity">
    <reaction evidence="1">
        <text>adenosine(1518)/adenosine(1519) in 16S rRNA + 4 S-adenosyl-L-methionine = N(6)-dimethyladenosine(1518)/N(6)-dimethyladenosine(1519) in 16S rRNA + 4 S-adenosyl-L-homocysteine + 4 H(+)</text>
        <dbReference type="Rhea" id="RHEA:19609"/>
        <dbReference type="Rhea" id="RHEA-COMP:10232"/>
        <dbReference type="Rhea" id="RHEA-COMP:10233"/>
        <dbReference type="ChEBI" id="CHEBI:15378"/>
        <dbReference type="ChEBI" id="CHEBI:57856"/>
        <dbReference type="ChEBI" id="CHEBI:59789"/>
        <dbReference type="ChEBI" id="CHEBI:74411"/>
        <dbReference type="ChEBI" id="CHEBI:74493"/>
        <dbReference type="EC" id="2.1.1.182"/>
    </reaction>
</comment>
<comment type="subcellular location">
    <subcellularLocation>
        <location evidence="1">Cytoplasm</location>
    </subcellularLocation>
</comment>
<comment type="similarity">
    <text evidence="1">Belongs to the class I-like SAM-binding methyltransferase superfamily. rRNA adenine N(6)-methyltransferase family. RsmA subfamily.</text>
</comment>
<reference key="1">
    <citation type="journal article" date="2011" name="J. Bacteriol.">
        <title>Comparative genomics of 28 Salmonella enterica isolates: evidence for CRISPR-mediated adaptive sublineage evolution.</title>
        <authorList>
            <person name="Fricke W.F."/>
            <person name="Mammel M.K."/>
            <person name="McDermott P.F."/>
            <person name="Tartera C."/>
            <person name="White D.G."/>
            <person name="Leclerc J.E."/>
            <person name="Ravel J."/>
            <person name="Cebula T.A."/>
        </authorList>
    </citation>
    <scope>NUCLEOTIDE SEQUENCE [LARGE SCALE GENOMIC DNA]</scope>
    <source>
        <strain>SL483</strain>
    </source>
</reference>
<keyword id="KW-0963">Cytoplasm</keyword>
<keyword id="KW-0489">Methyltransferase</keyword>
<keyword id="KW-0694">RNA-binding</keyword>
<keyword id="KW-0698">rRNA processing</keyword>
<keyword id="KW-0949">S-adenosyl-L-methionine</keyword>
<keyword id="KW-0808">Transferase</keyword>